<sequence>MLYYLFDYLEKLQLPGARLFHYVSFRSAVAIILALLLATVIGNRIIERLRKAQIGETIRDLGLEGQLSKKGTPTMGGLIIIISILIPTLLLARLDNVYILLMIVTTLLLGSLGFLDDYIKVFRKKKEGLHGRYKIIGQVGLGFIIGIVLYMNPAVVIKENSEVLRDGQVERVHFNKQEVKSTKTTIPFVKNNNFDYADILPFEGKTKVLFGWILFVCVAVVVVTFISNCANLTDGLDGLATGSSAIIGVVLAIFAYVSSHIEMASYLNIMFIPGAEELTIFAFAFVGATIGFLWYNAYPAQVFMGDTGSLTLGGIIAVFALIIRKEMLLPILCFVFIIEGLSVMIQVFYFKLTKRRTGEGRRIFKMTPLHHHFQKPGNAGIDAWLQKPMQAIPESKITVRFWLVGIIMAAITIATLKMR</sequence>
<reference key="1">
    <citation type="journal article" date="2008" name="DNA Res.">
        <title>Determination of the genome sequence of Porphyromonas gingivalis strain ATCC 33277 and genomic comparison with strain W83 revealed extensive genome rearrangements in P. gingivalis.</title>
        <authorList>
            <person name="Naito M."/>
            <person name="Hirakawa H."/>
            <person name="Yamashita A."/>
            <person name="Ohara N."/>
            <person name="Shoji M."/>
            <person name="Yukitake H."/>
            <person name="Nakayama K."/>
            <person name="Toh H."/>
            <person name="Yoshimura F."/>
            <person name="Kuhara S."/>
            <person name="Hattori M."/>
            <person name="Hayashi T."/>
            <person name="Nakayama K."/>
        </authorList>
    </citation>
    <scope>NUCLEOTIDE SEQUENCE [LARGE SCALE GENOMIC DNA]</scope>
    <source>
        <strain>ATCC 33277 / DSM 20709 / CIP 103683 / JCM 12257 / NCTC 11834 / 2561</strain>
    </source>
</reference>
<dbReference type="EC" id="2.7.8.13" evidence="1"/>
<dbReference type="EMBL" id="AP009380">
    <property type="protein sequence ID" value="BAG33143.1"/>
    <property type="molecule type" value="Genomic_DNA"/>
</dbReference>
<dbReference type="RefSeq" id="WP_012457656.1">
    <property type="nucleotide sequence ID" value="NZ_CP025930.1"/>
</dbReference>
<dbReference type="SMR" id="B2RIE8"/>
<dbReference type="GeneID" id="29255850"/>
<dbReference type="KEGG" id="pgn:PGN_0624"/>
<dbReference type="eggNOG" id="COG0472">
    <property type="taxonomic scope" value="Bacteria"/>
</dbReference>
<dbReference type="HOGENOM" id="CLU_023982_0_0_10"/>
<dbReference type="OrthoDB" id="9805475at2"/>
<dbReference type="BioCyc" id="PGIN431947:G1G2V-685-MONOMER"/>
<dbReference type="UniPathway" id="UPA00219"/>
<dbReference type="Proteomes" id="UP000008842">
    <property type="component" value="Chromosome"/>
</dbReference>
<dbReference type="GO" id="GO:0005886">
    <property type="term" value="C:plasma membrane"/>
    <property type="evidence" value="ECO:0007669"/>
    <property type="project" value="UniProtKB-SubCell"/>
</dbReference>
<dbReference type="GO" id="GO:0046872">
    <property type="term" value="F:metal ion binding"/>
    <property type="evidence" value="ECO:0007669"/>
    <property type="project" value="UniProtKB-KW"/>
</dbReference>
<dbReference type="GO" id="GO:0008963">
    <property type="term" value="F:phospho-N-acetylmuramoyl-pentapeptide-transferase activity"/>
    <property type="evidence" value="ECO:0007669"/>
    <property type="project" value="UniProtKB-UniRule"/>
</dbReference>
<dbReference type="GO" id="GO:0051992">
    <property type="term" value="F:UDP-N-acetylmuramoyl-L-alanyl-D-glutamyl-meso-2,6-diaminopimelyl-D-alanyl-D-alanine:undecaprenyl-phosphate transferase activity"/>
    <property type="evidence" value="ECO:0007669"/>
    <property type="project" value="RHEA"/>
</dbReference>
<dbReference type="GO" id="GO:0051301">
    <property type="term" value="P:cell division"/>
    <property type="evidence" value="ECO:0007669"/>
    <property type="project" value="UniProtKB-KW"/>
</dbReference>
<dbReference type="GO" id="GO:0071555">
    <property type="term" value="P:cell wall organization"/>
    <property type="evidence" value="ECO:0007669"/>
    <property type="project" value="UniProtKB-KW"/>
</dbReference>
<dbReference type="GO" id="GO:0009252">
    <property type="term" value="P:peptidoglycan biosynthetic process"/>
    <property type="evidence" value="ECO:0007669"/>
    <property type="project" value="UniProtKB-UniRule"/>
</dbReference>
<dbReference type="GO" id="GO:0008360">
    <property type="term" value="P:regulation of cell shape"/>
    <property type="evidence" value="ECO:0007669"/>
    <property type="project" value="UniProtKB-KW"/>
</dbReference>
<dbReference type="CDD" id="cd06852">
    <property type="entry name" value="GT_MraY"/>
    <property type="match status" value="1"/>
</dbReference>
<dbReference type="HAMAP" id="MF_00038">
    <property type="entry name" value="MraY"/>
    <property type="match status" value="1"/>
</dbReference>
<dbReference type="InterPro" id="IPR000715">
    <property type="entry name" value="Glycosyl_transferase_4"/>
</dbReference>
<dbReference type="InterPro" id="IPR003524">
    <property type="entry name" value="PNAcMuramoyl-5peptid_Trfase"/>
</dbReference>
<dbReference type="InterPro" id="IPR018480">
    <property type="entry name" value="PNAcMuramoyl-5peptid_Trfase_CS"/>
</dbReference>
<dbReference type="NCBIfam" id="TIGR00445">
    <property type="entry name" value="mraY"/>
    <property type="match status" value="1"/>
</dbReference>
<dbReference type="PANTHER" id="PTHR22926">
    <property type="entry name" value="PHOSPHO-N-ACETYLMURAMOYL-PENTAPEPTIDE-TRANSFERASE"/>
    <property type="match status" value="1"/>
</dbReference>
<dbReference type="PANTHER" id="PTHR22926:SF5">
    <property type="entry name" value="PHOSPHO-N-ACETYLMURAMOYL-PENTAPEPTIDE-TRANSFERASE HOMOLOG"/>
    <property type="match status" value="1"/>
</dbReference>
<dbReference type="Pfam" id="PF00953">
    <property type="entry name" value="Glycos_transf_4"/>
    <property type="match status" value="1"/>
</dbReference>
<dbReference type="Pfam" id="PF10555">
    <property type="entry name" value="MraY_sig1"/>
    <property type="match status" value="1"/>
</dbReference>
<dbReference type="PROSITE" id="PS01347">
    <property type="entry name" value="MRAY_1"/>
    <property type="match status" value="1"/>
</dbReference>
<dbReference type="PROSITE" id="PS01348">
    <property type="entry name" value="MRAY_2"/>
    <property type="match status" value="1"/>
</dbReference>
<name>MRAY_PORG3</name>
<accession>B2RIE8</accession>
<evidence type="ECO:0000255" key="1">
    <source>
        <dbReference type="HAMAP-Rule" id="MF_00038"/>
    </source>
</evidence>
<gene>
    <name evidence="1" type="primary">mraY</name>
    <name type="ordered locus">PGN_0624</name>
</gene>
<keyword id="KW-0131">Cell cycle</keyword>
<keyword id="KW-0132">Cell division</keyword>
<keyword id="KW-0997">Cell inner membrane</keyword>
<keyword id="KW-1003">Cell membrane</keyword>
<keyword id="KW-0133">Cell shape</keyword>
<keyword id="KW-0961">Cell wall biogenesis/degradation</keyword>
<keyword id="KW-0460">Magnesium</keyword>
<keyword id="KW-0472">Membrane</keyword>
<keyword id="KW-0479">Metal-binding</keyword>
<keyword id="KW-0573">Peptidoglycan synthesis</keyword>
<keyword id="KW-0808">Transferase</keyword>
<keyword id="KW-0812">Transmembrane</keyword>
<keyword id="KW-1133">Transmembrane helix</keyword>
<protein>
    <recommendedName>
        <fullName evidence="1">Phospho-N-acetylmuramoyl-pentapeptide-transferase</fullName>
        <ecNumber evidence="1">2.7.8.13</ecNumber>
    </recommendedName>
    <alternativeName>
        <fullName evidence="1">UDP-MurNAc-pentapeptide phosphotransferase</fullName>
    </alternativeName>
</protein>
<comment type="function">
    <text evidence="1">Catalyzes the initial step of the lipid cycle reactions in the biosynthesis of the cell wall peptidoglycan: transfers peptidoglycan precursor phospho-MurNAc-pentapeptide from UDP-MurNAc-pentapeptide onto the lipid carrier undecaprenyl phosphate, yielding undecaprenyl-pyrophosphoryl-MurNAc-pentapeptide, known as lipid I.</text>
</comment>
<comment type="catalytic activity">
    <reaction evidence="1">
        <text>UDP-N-acetyl-alpha-D-muramoyl-L-alanyl-gamma-D-glutamyl-meso-2,6-diaminopimeloyl-D-alanyl-D-alanine + di-trans,octa-cis-undecaprenyl phosphate = di-trans,octa-cis-undecaprenyl diphospho-N-acetyl-alpha-D-muramoyl-L-alanyl-D-glutamyl-meso-2,6-diaminopimeloyl-D-alanyl-D-alanine + UMP</text>
        <dbReference type="Rhea" id="RHEA:28386"/>
        <dbReference type="ChEBI" id="CHEBI:57865"/>
        <dbReference type="ChEBI" id="CHEBI:60392"/>
        <dbReference type="ChEBI" id="CHEBI:61386"/>
        <dbReference type="ChEBI" id="CHEBI:61387"/>
        <dbReference type="EC" id="2.7.8.13"/>
    </reaction>
</comment>
<comment type="cofactor">
    <cofactor evidence="1">
        <name>Mg(2+)</name>
        <dbReference type="ChEBI" id="CHEBI:18420"/>
    </cofactor>
</comment>
<comment type="pathway">
    <text evidence="1">Cell wall biogenesis; peptidoglycan biosynthesis.</text>
</comment>
<comment type="subcellular location">
    <subcellularLocation>
        <location evidence="1">Cell inner membrane</location>
        <topology evidence="1">Multi-pass membrane protein</topology>
    </subcellularLocation>
</comment>
<comment type="similarity">
    <text evidence="1">Belongs to the glycosyltransferase 4 family. MraY subfamily.</text>
</comment>
<feature type="chain" id="PRO_1000090656" description="Phospho-N-acetylmuramoyl-pentapeptide-transferase">
    <location>
        <begin position="1"/>
        <end position="419"/>
    </location>
</feature>
<feature type="transmembrane region" description="Helical" evidence="1">
    <location>
        <begin position="22"/>
        <end position="42"/>
    </location>
</feature>
<feature type="transmembrane region" description="Helical" evidence="1">
    <location>
        <begin position="72"/>
        <end position="92"/>
    </location>
</feature>
<feature type="transmembrane region" description="Helical" evidence="1">
    <location>
        <begin position="99"/>
        <end position="119"/>
    </location>
</feature>
<feature type="transmembrane region" description="Helical" evidence="1">
    <location>
        <begin position="135"/>
        <end position="155"/>
    </location>
</feature>
<feature type="transmembrane region" description="Helical" evidence="1">
    <location>
        <begin position="208"/>
        <end position="228"/>
    </location>
</feature>
<feature type="transmembrane region" description="Helical" evidence="1">
    <location>
        <begin position="238"/>
        <end position="258"/>
    </location>
</feature>
<feature type="transmembrane region" description="Helical" evidence="1">
    <location>
        <begin position="278"/>
        <end position="298"/>
    </location>
</feature>
<feature type="transmembrane region" description="Helical" evidence="1">
    <location>
        <begin position="303"/>
        <end position="323"/>
    </location>
</feature>
<feature type="transmembrane region" description="Helical" evidence="1">
    <location>
        <begin position="328"/>
        <end position="348"/>
    </location>
</feature>
<feature type="transmembrane region" description="Helical" evidence="1">
    <location>
        <begin position="396"/>
        <end position="416"/>
    </location>
</feature>
<proteinExistence type="inferred from homology"/>
<organism>
    <name type="scientific">Porphyromonas gingivalis (strain ATCC 33277 / DSM 20709 / CIP 103683 / JCM 12257 / NCTC 11834 / 2561)</name>
    <dbReference type="NCBI Taxonomy" id="431947"/>
    <lineage>
        <taxon>Bacteria</taxon>
        <taxon>Pseudomonadati</taxon>
        <taxon>Bacteroidota</taxon>
        <taxon>Bacteroidia</taxon>
        <taxon>Bacteroidales</taxon>
        <taxon>Porphyromonadaceae</taxon>
        <taxon>Porphyromonas</taxon>
    </lineage>
</organism>